<proteinExistence type="inferred from homology"/>
<feature type="chain" id="PRO_0000206790" description="3',5'-cyclic-nucleotide phosphodiesterase">
    <location>
        <begin position="1"/>
        <end position="346"/>
    </location>
</feature>
<protein>
    <recommendedName>
        <fullName>3',5'-cyclic-nucleotide phosphodiesterase</fullName>
        <shortName>PDEase</shortName>
        <ecNumber>3.1.4.17</ecNumber>
    </recommendedName>
</protein>
<evidence type="ECO:0000305" key="1"/>
<name>PDE1_SCHPO</name>
<keyword id="KW-0114">cAMP</keyword>
<keyword id="KW-0378">Hydrolase</keyword>
<keyword id="KW-1185">Reference proteome</keyword>
<comment type="catalytic activity">
    <reaction>
        <text>a nucleoside 3',5'-cyclic phosphate + H2O = a nucleoside 5'-phosphate + H(+)</text>
        <dbReference type="Rhea" id="RHEA:14653"/>
        <dbReference type="ChEBI" id="CHEBI:15377"/>
        <dbReference type="ChEBI" id="CHEBI:15378"/>
        <dbReference type="ChEBI" id="CHEBI:57867"/>
        <dbReference type="ChEBI" id="CHEBI:58464"/>
        <dbReference type="EC" id="3.1.4.17"/>
    </reaction>
</comment>
<comment type="similarity">
    <text evidence="1">Belongs to the cyclic nucleotide phosphodiesterase class-II family.</text>
</comment>
<reference key="1">
    <citation type="journal article" date="1991" name="EMBO J.">
        <title>Interaction between ran1+ protein kinase and cAMP dependent protein kinase as negative regulators of fission yeast meiosis.</title>
        <authorList>
            <person name="Devoti J."/>
            <person name="Seydoux G."/>
            <person name="Beach D."/>
            <person name="McLeod M."/>
        </authorList>
    </citation>
    <scope>NUCLEOTIDE SEQUENCE [GENOMIC DNA]</scope>
</reference>
<reference key="2">
    <citation type="journal article" date="2002" name="Nature">
        <title>The genome sequence of Schizosaccharomyces pombe.</title>
        <authorList>
            <person name="Wood V."/>
            <person name="Gwilliam R."/>
            <person name="Rajandream M.A."/>
            <person name="Lyne M.H."/>
            <person name="Lyne R."/>
            <person name="Stewart A."/>
            <person name="Sgouros J.G."/>
            <person name="Peat N."/>
            <person name="Hayles J."/>
            <person name="Baker S.G."/>
            <person name="Basham D."/>
            <person name="Bowman S."/>
            <person name="Brooks K."/>
            <person name="Brown D."/>
            <person name="Brown S."/>
            <person name="Chillingworth T."/>
            <person name="Churcher C.M."/>
            <person name="Collins M."/>
            <person name="Connor R."/>
            <person name="Cronin A."/>
            <person name="Davis P."/>
            <person name="Feltwell T."/>
            <person name="Fraser A."/>
            <person name="Gentles S."/>
            <person name="Goble A."/>
            <person name="Hamlin N."/>
            <person name="Harris D.E."/>
            <person name="Hidalgo J."/>
            <person name="Hodgson G."/>
            <person name="Holroyd S."/>
            <person name="Hornsby T."/>
            <person name="Howarth S."/>
            <person name="Huckle E.J."/>
            <person name="Hunt S."/>
            <person name="Jagels K."/>
            <person name="James K.D."/>
            <person name="Jones L."/>
            <person name="Jones M."/>
            <person name="Leather S."/>
            <person name="McDonald S."/>
            <person name="McLean J."/>
            <person name="Mooney P."/>
            <person name="Moule S."/>
            <person name="Mungall K.L."/>
            <person name="Murphy L.D."/>
            <person name="Niblett D."/>
            <person name="Odell C."/>
            <person name="Oliver K."/>
            <person name="O'Neil S."/>
            <person name="Pearson D."/>
            <person name="Quail M.A."/>
            <person name="Rabbinowitsch E."/>
            <person name="Rutherford K.M."/>
            <person name="Rutter S."/>
            <person name="Saunders D."/>
            <person name="Seeger K."/>
            <person name="Sharp S."/>
            <person name="Skelton J."/>
            <person name="Simmonds M.N."/>
            <person name="Squares R."/>
            <person name="Squares S."/>
            <person name="Stevens K."/>
            <person name="Taylor K."/>
            <person name="Taylor R.G."/>
            <person name="Tivey A."/>
            <person name="Walsh S.V."/>
            <person name="Warren T."/>
            <person name="Whitehead S."/>
            <person name="Woodward J.R."/>
            <person name="Volckaert G."/>
            <person name="Aert R."/>
            <person name="Robben J."/>
            <person name="Grymonprez B."/>
            <person name="Weltjens I."/>
            <person name="Vanstreels E."/>
            <person name="Rieger M."/>
            <person name="Schaefer M."/>
            <person name="Mueller-Auer S."/>
            <person name="Gabel C."/>
            <person name="Fuchs M."/>
            <person name="Duesterhoeft A."/>
            <person name="Fritzc C."/>
            <person name="Holzer E."/>
            <person name="Moestl D."/>
            <person name="Hilbert H."/>
            <person name="Borzym K."/>
            <person name="Langer I."/>
            <person name="Beck A."/>
            <person name="Lehrach H."/>
            <person name="Reinhardt R."/>
            <person name="Pohl T.M."/>
            <person name="Eger P."/>
            <person name="Zimmermann W."/>
            <person name="Wedler H."/>
            <person name="Wambutt R."/>
            <person name="Purnelle B."/>
            <person name="Goffeau A."/>
            <person name="Cadieu E."/>
            <person name="Dreano S."/>
            <person name="Gloux S."/>
            <person name="Lelaure V."/>
            <person name="Mottier S."/>
            <person name="Galibert F."/>
            <person name="Aves S.J."/>
            <person name="Xiang Z."/>
            <person name="Hunt C."/>
            <person name="Moore K."/>
            <person name="Hurst S.M."/>
            <person name="Lucas M."/>
            <person name="Rochet M."/>
            <person name="Gaillardin C."/>
            <person name="Tallada V.A."/>
            <person name="Garzon A."/>
            <person name="Thode G."/>
            <person name="Daga R.R."/>
            <person name="Cruzado L."/>
            <person name="Jimenez J."/>
            <person name="Sanchez M."/>
            <person name="del Rey F."/>
            <person name="Benito J."/>
            <person name="Dominguez A."/>
            <person name="Revuelta J.L."/>
            <person name="Moreno S."/>
            <person name="Armstrong J."/>
            <person name="Forsburg S.L."/>
            <person name="Cerutti L."/>
            <person name="Lowe T."/>
            <person name="McCombie W.R."/>
            <person name="Paulsen I."/>
            <person name="Potashkin J."/>
            <person name="Shpakovski G.V."/>
            <person name="Ussery D."/>
            <person name="Barrell B.G."/>
            <person name="Nurse P."/>
        </authorList>
    </citation>
    <scope>NUCLEOTIDE SEQUENCE [LARGE SCALE GENOMIC DNA]</scope>
    <source>
        <strain>972 / ATCC 24843</strain>
    </source>
</reference>
<gene>
    <name type="primary">cgs2</name>
    <name type="synonym">pde1</name>
    <name type="ORF">SPCC285.09c</name>
</gene>
<organism>
    <name type="scientific">Schizosaccharomyces pombe (strain 972 / ATCC 24843)</name>
    <name type="common">Fission yeast</name>
    <dbReference type="NCBI Taxonomy" id="284812"/>
    <lineage>
        <taxon>Eukaryota</taxon>
        <taxon>Fungi</taxon>
        <taxon>Dikarya</taxon>
        <taxon>Ascomycota</taxon>
        <taxon>Taphrinomycotina</taxon>
        <taxon>Schizosaccharomycetes</taxon>
        <taxon>Schizosaccharomycetales</taxon>
        <taxon>Schizosaccharomycetaceae</taxon>
        <taxon>Schizosaccharomyces</taxon>
    </lineage>
</organism>
<accession>P36599</accession>
<sequence>MHAALEIKEAEFQTDQVVGLVENSFTLYSLGQNGGPLESCCSSHLISDGAFQEIISLDGGSHLSALVELIQSKHLSVDSWSSITKYDNYTVENESYAKAWHLSEQRIKTFLITHCHLDHIYGAVINSAMFGPQNPRTIVGLNYVIDTLKKHVFNNLLWPSLDKAGFINFQVVEPSMYTSLTTTLSILPFPVNHGSSFGQELKSSAFLFRNNLSDRYFLAFGDVEPDMVASEPLNIHIWRACSSLIAQRKLSHILIECSTPDIPDTLLFGHFCPRHLVNELCILQSLVQSYGVIMPTLTCLLTHLKSHPLQSANPADVILEQLESLSSKSSLSVTFKILQRGQFYKF</sequence>
<dbReference type="EC" id="3.1.4.17"/>
<dbReference type="EMBL" id="S64907">
    <property type="protein sequence ID" value="AAB20315.1"/>
    <property type="molecule type" value="Genomic_DNA"/>
</dbReference>
<dbReference type="EMBL" id="CU329672">
    <property type="protein sequence ID" value="CAA20848.1"/>
    <property type="molecule type" value="Genomic_DNA"/>
</dbReference>
<dbReference type="PIR" id="S22442">
    <property type="entry name" value="S22442"/>
</dbReference>
<dbReference type="RefSeq" id="NP_588337.1">
    <property type="nucleotide sequence ID" value="NM_001023328.2"/>
</dbReference>
<dbReference type="SMR" id="P36599"/>
<dbReference type="BioGRID" id="275777">
    <property type="interactions" value="54"/>
</dbReference>
<dbReference type="FunCoup" id="P36599">
    <property type="interactions" value="46"/>
</dbReference>
<dbReference type="STRING" id="284812.P36599"/>
<dbReference type="iPTMnet" id="P36599"/>
<dbReference type="PaxDb" id="4896-SPCC285.09c.1"/>
<dbReference type="EnsemblFungi" id="SPCC285.09c.1">
    <property type="protein sequence ID" value="SPCC285.09c.1:pep"/>
    <property type="gene ID" value="SPCC285.09c"/>
</dbReference>
<dbReference type="GeneID" id="2539207"/>
<dbReference type="KEGG" id="spo:2539207"/>
<dbReference type="PomBase" id="SPCC285.09c">
    <property type="gene designation" value="cgs2"/>
</dbReference>
<dbReference type="VEuPathDB" id="FungiDB:SPCC285.09c"/>
<dbReference type="eggNOG" id="ENOG502RFKK">
    <property type="taxonomic scope" value="Eukaryota"/>
</dbReference>
<dbReference type="HOGENOM" id="CLU_016658_2_0_1"/>
<dbReference type="InParanoid" id="P36599"/>
<dbReference type="OMA" id="YYITHPH"/>
<dbReference type="PhylomeDB" id="P36599"/>
<dbReference type="PRO" id="PR:P36599"/>
<dbReference type="Proteomes" id="UP000002485">
    <property type="component" value="Chromosome III"/>
</dbReference>
<dbReference type="GO" id="GO:0005829">
    <property type="term" value="C:cytosol"/>
    <property type="evidence" value="ECO:0007005"/>
    <property type="project" value="PomBase"/>
</dbReference>
<dbReference type="GO" id="GO:0005634">
    <property type="term" value="C:nucleus"/>
    <property type="evidence" value="ECO:0007005"/>
    <property type="project" value="PomBase"/>
</dbReference>
<dbReference type="GO" id="GO:0004115">
    <property type="term" value="F:3',5'-cyclic-AMP phosphodiesterase activity"/>
    <property type="evidence" value="ECO:0000315"/>
    <property type="project" value="PomBase"/>
</dbReference>
<dbReference type="GO" id="GO:0047555">
    <property type="term" value="F:3',5'-cyclic-GMP phosphodiesterase activity"/>
    <property type="evidence" value="ECO:0000315"/>
    <property type="project" value="PomBase"/>
</dbReference>
<dbReference type="GO" id="GO:0006198">
    <property type="term" value="P:cAMP catabolic process"/>
    <property type="evidence" value="ECO:0000255"/>
    <property type="project" value="PomBase"/>
</dbReference>
<dbReference type="GO" id="GO:0106072">
    <property type="term" value="P:negative regulation of adenylate cyclase-activating G protein-coupled receptor signaling pathway"/>
    <property type="evidence" value="ECO:0000315"/>
    <property type="project" value="PomBase"/>
</dbReference>
<dbReference type="GO" id="GO:0110034">
    <property type="term" value="P:negative regulation of adenylate cyclase-activating glucose-activated G protein-coupled receptor signaling pathway"/>
    <property type="evidence" value="ECO:0000315"/>
    <property type="project" value="PomBase"/>
</dbReference>
<dbReference type="GO" id="GO:1902660">
    <property type="term" value="P:negative regulation of glucose mediated signaling pathway"/>
    <property type="evidence" value="ECO:0000318"/>
    <property type="project" value="GO_Central"/>
</dbReference>
<dbReference type="GO" id="GO:0051447">
    <property type="term" value="P:negative regulation of meiotic cell cycle"/>
    <property type="evidence" value="ECO:0000315"/>
    <property type="project" value="PomBase"/>
</dbReference>
<dbReference type="CDD" id="cd07735">
    <property type="entry name" value="class_II_PDE_MBL-fold"/>
    <property type="match status" value="1"/>
</dbReference>
<dbReference type="FunFam" id="3.60.15.10:FF:000110">
    <property type="entry name" value="cAMP-specific phosphodiesterase"/>
    <property type="match status" value="1"/>
</dbReference>
<dbReference type="Gene3D" id="3.60.15.10">
    <property type="entry name" value="Ribonuclease Z/Hydroxyacylglutathione hydrolase-like"/>
    <property type="match status" value="1"/>
</dbReference>
<dbReference type="InterPro" id="IPR024225">
    <property type="entry name" value="cAMP-PdiesteraseII_CS"/>
</dbReference>
<dbReference type="InterPro" id="IPR000396">
    <property type="entry name" value="Pdiesterase2"/>
</dbReference>
<dbReference type="InterPro" id="IPR036866">
    <property type="entry name" value="RibonucZ/Hydroxyglut_hydro"/>
</dbReference>
<dbReference type="PANTHER" id="PTHR28283">
    <property type="entry name" value="3',5'-CYCLIC-NUCLEOTIDE PHOSPHODIESTERASE 1"/>
    <property type="match status" value="1"/>
</dbReference>
<dbReference type="PANTHER" id="PTHR28283:SF1">
    <property type="entry name" value="3',5'-CYCLIC-NUCLEOTIDE PHOSPHODIESTERASE 1"/>
    <property type="match status" value="1"/>
</dbReference>
<dbReference type="Pfam" id="PF02112">
    <property type="entry name" value="PDEase_II"/>
    <property type="match status" value="1"/>
</dbReference>
<dbReference type="PIRSF" id="PIRSF000962">
    <property type="entry name" value="Cyc_nuc_PDEase"/>
    <property type="match status" value="1"/>
</dbReference>
<dbReference type="PRINTS" id="PR00388">
    <property type="entry name" value="PDIESTERASE2"/>
</dbReference>
<dbReference type="SUPFAM" id="SSF56281">
    <property type="entry name" value="Metallo-hydrolase/oxidoreductase"/>
    <property type="match status" value="1"/>
</dbReference>
<dbReference type="PROSITE" id="PS00607">
    <property type="entry name" value="PDEASE_II"/>
    <property type="match status" value="1"/>
</dbReference>